<protein>
    <recommendedName>
        <fullName evidence="1">Methionine import ATP-binding protein MetN 3</fullName>
        <ecNumber evidence="1">7.4.2.11</ecNumber>
    </recommendedName>
</protein>
<name>METN3_BACAN</name>
<evidence type="ECO:0000255" key="1">
    <source>
        <dbReference type="HAMAP-Rule" id="MF_01719"/>
    </source>
</evidence>
<reference key="1">
    <citation type="journal article" date="2003" name="Nature">
        <title>The genome sequence of Bacillus anthracis Ames and comparison to closely related bacteria.</title>
        <authorList>
            <person name="Read T.D."/>
            <person name="Peterson S.N."/>
            <person name="Tourasse N.J."/>
            <person name="Baillie L.W."/>
            <person name="Paulsen I.T."/>
            <person name="Nelson K.E."/>
            <person name="Tettelin H."/>
            <person name="Fouts D.E."/>
            <person name="Eisen J.A."/>
            <person name="Gill S.R."/>
            <person name="Holtzapple E.K."/>
            <person name="Okstad O.A."/>
            <person name="Helgason E."/>
            <person name="Rilstone J."/>
            <person name="Wu M."/>
            <person name="Kolonay J.F."/>
            <person name="Beanan M.J."/>
            <person name="Dodson R.J."/>
            <person name="Brinkac L.M."/>
            <person name="Gwinn M.L."/>
            <person name="DeBoy R.T."/>
            <person name="Madpu R."/>
            <person name="Daugherty S.C."/>
            <person name="Durkin A.S."/>
            <person name="Haft D.H."/>
            <person name="Nelson W.C."/>
            <person name="Peterson J.D."/>
            <person name="Pop M."/>
            <person name="Khouri H.M."/>
            <person name="Radune D."/>
            <person name="Benton J.L."/>
            <person name="Mahamoud Y."/>
            <person name="Jiang L."/>
            <person name="Hance I.R."/>
            <person name="Weidman J.F."/>
            <person name="Berry K.J."/>
            <person name="Plaut R.D."/>
            <person name="Wolf A.M."/>
            <person name="Watkins K.L."/>
            <person name="Nierman W.C."/>
            <person name="Hazen A."/>
            <person name="Cline R.T."/>
            <person name="Redmond C."/>
            <person name="Thwaite J.E."/>
            <person name="White O."/>
            <person name="Salzberg S.L."/>
            <person name="Thomason B."/>
            <person name="Friedlander A.M."/>
            <person name="Koehler T.M."/>
            <person name="Hanna P.C."/>
            <person name="Kolstoe A.-B."/>
            <person name="Fraser C.M."/>
        </authorList>
    </citation>
    <scope>NUCLEOTIDE SEQUENCE [LARGE SCALE GENOMIC DNA]</scope>
    <source>
        <strain>Ames / isolate Porton</strain>
    </source>
</reference>
<reference key="2">
    <citation type="submission" date="2004-01" db="EMBL/GenBank/DDBJ databases">
        <title>Complete genome sequence of Bacillus anthracis Sterne.</title>
        <authorList>
            <person name="Brettin T.S."/>
            <person name="Bruce D."/>
            <person name="Challacombe J.F."/>
            <person name="Gilna P."/>
            <person name="Han C."/>
            <person name="Hill K."/>
            <person name="Hitchcock P."/>
            <person name="Jackson P."/>
            <person name="Keim P."/>
            <person name="Longmire J."/>
            <person name="Lucas S."/>
            <person name="Okinaka R."/>
            <person name="Richardson P."/>
            <person name="Rubin E."/>
            <person name="Tice H."/>
        </authorList>
    </citation>
    <scope>NUCLEOTIDE SEQUENCE [LARGE SCALE GENOMIC DNA]</scope>
    <source>
        <strain>Sterne</strain>
    </source>
</reference>
<reference key="3">
    <citation type="journal article" date="2009" name="J. Bacteriol.">
        <title>The complete genome sequence of Bacillus anthracis Ames 'Ancestor'.</title>
        <authorList>
            <person name="Ravel J."/>
            <person name="Jiang L."/>
            <person name="Stanley S.T."/>
            <person name="Wilson M.R."/>
            <person name="Decker R.S."/>
            <person name="Read T.D."/>
            <person name="Worsham P."/>
            <person name="Keim P.S."/>
            <person name="Salzberg S.L."/>
            <person name="Fraser-Liggett C.M."/>
            <person name="Rasko D.A."/>
        </authorList>
    </citation>
    <scope>NUCLEOTIDE SEQUENCE [LARGE SCALE GENOMIC DNA]</scope>
    <source>
        <strain>Ames ancestor</strain>
    </source>
</reference>
<dbReference type="EC" id="7.4.2.11" evidence="1"/>
<dbReference type="EMBL" id="AE016879">
    <property type="protein sequence ID" value="AAP28889.1"/>
    <property type="molecule type" value="Genomic_DNA"/>
</dbReference>
<dbReference type="EMBL" id="AE017225">
    <property type="protein sequence ID" value="AAT57148.1"/>
    <property type="molecule type" value="Genomic_DNA"/>
</dbReference>
<dbReference type="EMBL" id="AE017334">
    <property type="protein sequence ID" value="AAT34352.1"/>
    <property type="molecule type" value="Genomic_DNA"/>
</dbReference>
<dbReference type="RefSeq" id="NP_847403.1">
    <property type="nucleotide sequence ID" value="NC_003997.3"/>
</dbReference>
<dbReference type="RefSeq" id="WP_000601758.1">
    <property type="nucleotide sequence ID" value="NZ_WXXJ01000017.1"/>
</dbReference>
<dbReference type="RefSeq" id="YP_031098.1">
    <property type="nucleotide sequence ID" value="NC_005945.1"/>
</dbReference>
<dbReference type="SMR" id="Q81XL3"/>
<dbReference type="STRING" id="261594.GBAA_5222"/>
<dbReference type="DNASU" id="1084650"/>
<dbReference type="KEGG" id="ban:BA_5222"/>
<dbReference type="KEGG" id="bar:GBAA_5222"/>
<dbReference type="KEGG" id="bat:BAS4855"/>
<dbReference type="PATRIC" id="fig|198094.11.peg.5184"/>
<dbReference type="eggNOG" id="COG1135">
    <property type="taxonomic scope" value="Bacteria"/>
</dbReference>
<dbReference type="HOGENOM" id="CLU_000604_1_3_9"/>
<dbReference type="OMA" id="VIRKICH"/>
<dbReference type="OrthoDB" id="9802264at2"/>
<dbReference type="Proteomes" id="UP000000427">
    <property type="component" value="Chromosome"/>
</dbReference>
<dbReference type="Proteomes" id="UP000000594">
    <property type="component" value="Chromosome"/>
</dbReference>
<dbReference type="GO" id="GO:0005886">
    <property type="term" value="C:plasma membrane"/>
    <property type="evidence" value="ECO:0007669"/>
    <property type="project" value="UniProtKB-SubCell"/>
</dbReference>
<dbReference type="GO" id="GO:0033232">
    <property type="term" value="F:ABC-type D-methionine transporter activity"/>
    <property type="evidence" value="ECO:0007669"/>
    <property type="project" value="UniProtKB-EC"/>
</dbReference>
<dbReference type="GO" id="GO:0005524">
    <property type="term" value="F:ATP binding"/>
    <property type="evidence" value="ECO:0007669"/>
    <property type="project" value="UniProtKB-KW"/>
</dbReference>
<dbReference type="GO" id="GO:0016887">
    <property type="term" value="F:ATP hydrolysis activity"/>
    <property type="evidence" value="ECO:0007669"/>
    <property type="project" value="InterPro"/>
</dbReference>
<dbReference type="CDD" id="cd03258">
    <property type="entry name" value="ABC_MetN_methionine_transporter"/>
    <property type="match status" value="1"/>
</dbReference>
<dbReference type="FunFam" id="3.30.70.260:FF:000057">
    <property type="entry name" value="Methionine import ATP-binding protein MetN"/>
    <property type="match status" value="1"/>
</dbReference>
<dbReference type="FunFam" id="3.40.50.300:FF:000233">
    <property type="entry name" value="Methionine import ATP-binding protein MetN"/>
    <property type="match status" value="1"/>
</dbReference>
<dbReference type="Gene3D" id="3.30.70.260">
    <property type="match status" value="1"/>
</dbReference>
<dbReference type="Gene3D" id="3.40.50.300">
    <property type="entry name" value="P-loop containing nucleotide triphosphate hydrolases"/>
    <property type="match status" value="1"/>
</dbReference>
<dbReference type="InterPro" id="IPR003593">
    <property type="entry name" value="AAA+_ATPase"/>
</dbReference>
<dbReference type="InterPro" id="IPR003439">
    <property type="entry name" value="ABC_transporter-like_ATP-bd"/>
</dbReference>
<dbReference type="InterPro" id="IPR017871">
    <property type="entry name" value="ABC_transporter-like_CS"/>
</dbReference>
<dbReference type="InterPro" id="IPR045865">
    <property type="entry name" value="ACT-like_dom_sf"/>
</dbReference>
<dbReference type="InterPro" id="IPR041701">
    <property type="entry name" value="MetN_ABC"/>
</dbReference>
<dbReference type="InterPro" id="IPR050086">
    <property type="entry name" value="MetN_ABC_transporter-like"/>
</dbReference>
<dbReference type="InterPro" id="IPR018449">
    <property type="entry name" value="NIL_domain"/>
</dbReference>
<dbReference type="InterPro" id="IPR027417">
    <property type="entry name" value="P-loop_NTPase"/>
</dbReference>
<dbReference type="PANTHER" id="PTHR43166">
    <property type="entry name" value="AMINO ACID IMPORT ATP-BINDING PROTEIN"/>
    <property type="match status" value="1"/>
</dbReference>
<dbReference type="PANTHER" id="PTHR43166:SF36">
    <property type="entry name" value="METHIONINE IMPORT ATP-BINDING PROTEIN METN 2"/>
    <property type="match status" value="1"/>
</dbReference>
<dbReference type="Pfam" id="PF00005">
    <property type="entry name" value="ABC_tran"/>
    <property type="match status" value="1"/>
</dbReference>
<dbReference type="Pfam" id="PF09383">
    <property type="entry name" value="NIL"/>
    <property type="match status" value="1"/>
</dbReference>
<dbReference type="SMART" id="SM00382">
    <property type="entry name" value="AAA"/>
    <property type="match status" value="1"/>
</dbReference>
<dbReference type="SMART" id="SM00930">
    <property type="entry name" value="NIL"/>
    <property type="match status" value="1"/>
</dbReference>
<dbReference type="SUPFAM" id="SSF55021">
    <property type="entry name" value="ACT-like"/>
    <property type="match status" value="1"/>
</dbReference>
<dbReference type="SUPFAM" id="SSF52540">
    <property type="entry name" value="P-loop containing nucleoside triphosphate hydrolases"/>
    <property type="match status" value="1"/>
</dbReference>
<dbReference type="PROSITE" id="PS00211">
    <property type="entry name" value="ABC_TRANSPORTER_1"/>
    <property type="match status" value="1"/>
</dbReference>
<dbReference type="PROSITE" id="PS50893">
    <property type="entry name" value="ABC_TRANSPORTER_2"/>
    <property type="match status" value="1"/>
</dbReference>
<dbReference type="PROSITE" id="PS51264">
    <property type="entry name" value="METN"/>
    <property type="match status" value="1"/>
</dbReference>
<keyword id="KW-0029">Amino-acid transport</keyword>
<keyword id="KW-0067">ATP-binding</keyword>
<keyword id="KW-1003">Cell membrane</keyword>
<keyword id="KW-0472">Membrane</keyword>
<keyword id="KW-0547">Nucleotide-binding</keyword>
<keyword id="KW-1185">Reference proteome</keyword>
<keyword id="KW-1278">Translocase</keyword>
<keyword id="KW-0813">Transport</keyword>
<sequence length="341" mass="37883">MILLENVKKIYKAKSGDVTAVDNANLKIDKGEIFGVIGYSGAGKSSLIRLFNQLEKPTSGQITIANRVISAITGSELRKARQEIGMIFQHFNLLWSRTVRENIEFPLEIAGVDKAKRRKRVDELIHLVGLEGRGDAYPSQLSGGQKQRVGIARALANNPQVLLCDEATSALDPETTDQILDLLLDINKRLGLTIVLITHEMHVIRKICNRVAVMEKGKIVETGPVLDVFRNPQQDITKRFVQQLTDSEDTNETIESLIEKYPDGKVIRLQFIGEAVERPVLQRLMQRSDIEVSILQGNIAQTNNGSYGSLVVHLNGEETAIQQAIEGIHQDQVELEVIAHG</sequence>
<gene>
    <name evidence="1" type="primary">metN3</name>
    <name type="ordered locus">BA_5222</name>
    <name type="ordered locus">GBAA_5222</name>
    <name type="ordered locus">BAS4855</name>
</gene>
<proteinExistence type="inferred from homology"/>
<organism>
    <name type="scientific">Bacillus anthracis</name>
    <dbReference type="NCBI Taxonomy" id="1392"/>
    <lineage>
        <taxon>Bacteria</taxon>
        <taxon>Bacillati</taxon>
        <taxon>Bacillota</taxon>
        <taxon>Bacilli</taxon>
        <taxon>Bacillales</taxon>
        <taxon>Bacillaceae</taxon>
        <taxon>Bacillus</taxon>
        <taxon>Bacillus cereus group</taxon>
    </lineage>
</organism>
<comment type="function">
    <text evidence="1">Part of the ABC transporter complex MetNIQ involved in methionine import. Responsible for energy coupling to the transport system.</text>
</comment>
<comment type="catalytic activity">
    <reaction evidence="1">
        <text>L-methionine(out) + ATP + H2O = L-methionine(in) + ADP + phosphate + H(+)</text>
        <dbReference type="Rhea" id="RHEA:29779"/>
        <dbReference type="ChEBI" id="CHEBI:15377"/>
        <dbReference type="ChEBI" id="CHEBI:15378"/>
        <dbReference type="ChEBI" id="CHEBI:30616"/>
        <dbReference type="ChEBI" id="CHEBI:43474"/>
        <dbReference type="ChEBI" id="CHEBI:57844"/>
        <dbReference type="ChEBI" id="CHEBI:456216"/>
        <dbReference type="EC" id="7.4.2.11"/>
    </reaction>
</comment>
<comment type="catalytic activity">
    <reaction evidence="1">
        <text>D-methionine(out) + ATP + H2O = D-methionine(in) + ADP + phosphate + H(+)</text>
        <dbReference type="Rhea" id="RHEA:29767"/>
        <dbReference type="ChEBI" id="CHEBI:15377"/>
        <dbReference type="ChEBI" id="CHEBI:15378"/>
        <dbReference type="ChEBI" id="CHEBI:30616"/>
        <dbReference type="ChEBI" id="CHEBI:43474"/>
        <dbReference type="ChEBI" id="CHEBI:57932"/>
        <dbReference type="ChEBI" id="CHEBI:456216"/>
        <dbReference type="EC" id="7.4.2.11"/>
    </reaction>
</comment>
<comment type="subunit">
    <text evidence="1">The complex is composed of two ATP-binding proteins (MetN), two transmembrane proteins (MetI) and a solute-binding protein (MetQ).</text>
</comment>
<comment type="subcellular location">
    <subcellularLocation>
        <location evidence="1">Cell membrane</location>
        <topology evidence="1">Peripheral membrane protein</topology>
    </subcellularLocation>
</comment>
<comment type="similarity">
    <text evidence="1">Belongs to the ABC transporter superfamily. Methionine importer (TC 3.A.1.24) family.</text>
</comment>
<accession>Q81XL3</accession>
<accession>Q6HRE0</accession>
<accession>Q6KKR0</accession>
<feature type="chain" id="PRO_0000270231" description="Methionine import ATP-binding protein MetN 3">
    <location>
        <begin position="1"/>
        <end position="341"/>
    </location>
</feature>
<feature type="domain" description="ABC transporter" evidence="1">
    <location>
        <begin position="2"/>
        <end position="241"/>
    </location>
</feature>
<feature type="binding site" evidence="1">
    <location>
        <begin position="38"/>
        <end position="45"/>
    </location>
    <ligand>
        <name>ATP</name>
        <dbReference type="ChEBI" id="CHEBI:30616"/>
    </ligand>
</feature>